<protein>
    <recommendedName>
        <fullName evidence="1">N-succinylglutamate 5-semialdehyde dehydrogenase</fullName>
        <ecNumber evidence="1">1.2.1.71</ecNumber>
    </recommendedName>
    <alternativeName>
        <fullName evidence="1">Succinylglutamic semialdehyde dehydrogenase</fullName>
        <shortName evidence="1">SGSD</shortName>
    </alternativeName>
</protein>
<sequence length="489" mass="51947">MQAKQQLLIDGAWVDGDAARFAKTDPVSGETLWTATAASATQVEHAVAAARQAFPDWARRSFAERQAVVERFRECLETHREHLATAIAQETGKPLWEARTEVGAMIGKVAISITAYHERTGERARDIGDARAVLRHRPHGVLAVYGPYNFPGHLPNGHIVPALLAGNAVVFKPSEQTPMTADLTLQCWLEAGLPAGVINLVQGAAEVGQALAGSADIDGLLFTGSAKVGGLLHRQFGGQVDKILALELGGNNPLVVKDVPDREAAVLSILQSAFASGGQRCTCARRLIVPHGAVGDDLIDALTSAIAELRVAAPFSEPAPFYAGLTSVEAADGLLAAQDDLVARGGRPLSRMRRLQAGTSLLSPGLIDVTGCDVPDEEHFGPLLKVHRYRDWDEAIALANDTRYGLSAGLIGGERADWDDFLLRIRAGIVNWNRQTTGASSDAPFGGIGDSGNHRPSAYYAADYCAYPVASMEAETLVLPETLPPGVVL</sequence>
<gene>
    <name evidence="1" type="primary">astD</name>
    <name type="ordered locus">Csal_2805</name>
</gene>
<organism>
    <name type="scientific">Chromohalobacter salexigens (strain ATCC BAA-138 / DSM 3043 / CIP 106854 / NCIMB 13768 / 1H11)</name>
    <dbReference type="NCBI Taxonomy" id="290398"/>
    <lineage>
        <taxon>Bacteria</taxon>
        <taxon>Pseudomonadati</taxon>
        <taxon>Pseudomonadota</taxon>
        <taxon>Gammaproteobacteria</taxon>
        <taxon>Oceanospirillales</taxon>
        <taxon>Halomonadaceae</taxon>
        <taxon>Chromohalobacter</taxon>
    </lineage>
</organism>
<proteinExistence type="inferred from homology"/>
<name>ASTD_CHRSD</name>
<accession>Q1QTQ7</accession>
<dbReference type="EC" id="1.2.1.71" evidence="1"/>
<dbReference type="EMBL" id="CP000285">
    <property type="protein sequence ID" value="ABE60151.1"/>
    <property type="molecule type" value="Genomic_DNA"/>
</dbReference>
<dbReference type="RefSeq" id="WP_011508097.1">
    <property type="nucleotide sequence ID" value="NC_007963.1"/>
</dbReference>
<dbReference type="SMR" id="Q1QTQ7"/>
<dbReference type="STRING" id="290398.Csal_2805"/>
<dbReference type="GeneID" id="95335499"/>
<dbReference type="KEGG" id="csa:Csal_2805"/>
<dbReference type="eggNOG" id="COG1012">
    <property type="taxonomic scope" value="Bacteria"/>
</dbReference>
<dbReference type="HOGENOM" id="CLU_005391_1_0_6"/>
<dbReference type="OrthoDB" id="9812625at2"/>
<dbReference type="UniPathway" id="UPA00185">
    <property type="reaction ID" value="UER00282"/>
</dbReference>
<dbReference type="Proteomes" id="UP000000239">
    <property type="component" value="Chromosome"/>
</dbReference>
<dbReference type="GO" id="GO:0043824">
    <property type="term" value="F:succinylglutamate-semialdehyde dehydrogenase activity"/>
    <property type="evidence" value="ECO:0007669"/>
    <property type="project" value="UniProtKB-EC"/>
</dbReference>
<dbReference type="GO" id="GO:0019544">
    <property type="term" value="P:arginine catabolic process to glutamate"/>
    <property type="evidence" value="ECO:0007669"/>
    <property type="project" value="UniProtKB-UniRule"/>
</dbReference>
<dbReference type="GO" id="GO:0019545">
    <property type="term" value="P:arginine catabolic process to succinate"/>
    <property type="evidence" value="ECO:0007669"/>
    <property type="project" value="UniProtKB-UniRule"/>
</dbReference>
<dbReference type="CDD" id="cd07095">
    <property type="entry name" value="ALDH_SGSD_AstD"/>
    <property type="match status" value="1"/>
</dbReference>
<dbReference type="FunFam" id="3.40.605.10:FF:000010">
    <property type="entry name" value="N-succinylglutamate 5-semialdehyde dehydrogenase"/>
    <property type="match status" value="1"/>
</dbReference>
<dbReference type="Gene3D" id="3.40.605.10">
    <property type="entry name" value="Aldehyde Dehydrogenase, Chain A, domain 1"/>
    <property type="match status" value="1"/>
</dbReference>
<dbReference type="Gene3D" id="3.40.309.10">
    <property type="entry name" value="Aldehyde Dehydrogenase, Chain A, domain 2"/>
    <property type="match status" value="1"/>
</dbReference>
<dbReference type="HAMAP" id="MF_01174">
    <property type="entry name" value="Aldedh_AstD"/>
    <property type="match status" value="1"/>
</dbReference>
<dbReference type="InterPro" id="IPR016161">
    <property type="entry name" value="Ald_DH/histidinol_DH"/>
</dbReference>
<dbReference type="InterPro" id="IPR016163">
    <property type="entry name" value="Ald_DH_C"/>
</dbReference>
<dbReference type="InterPro" id="IPR016160">
    <property type="entry name" value="Ald_DH_CS_CYS"/>
</dbReference>
<dbReference type="InterPro" id="IPR029510">
    <property type="entry name" value="Ald_DH_CS_GLU"/>
</dbReference>
<dbReference type="InterPro" id="IPR016162">
    <property type="entry name" value="Ald_DH_N"/>
</dbReference>
<dbReference type="InterPro" id="IPR015590">
    <property type="entry name" value="Aldehyde_DH_dom"/>
</dbReference>
<dbReference type="InterPro" id="IPR050740">
    <property type="entry name" value="Aldehyde_DH_Superfamily"/>
</dbReference>
<dbReference type="InterPro" id="IPR017649">
    <property type="entry name" value="SuccinylGlu_semiald_DH_AstD"/>
</dbReference>
<dbReference type="NCBIfam" id="TIGR03240">
    <property type="entry name" value="arg_catab_astD"/>
    <property type="match status" value="1"/>
</dbReference>
<dbReference type="NCBIfam" id="NF006992">
    <property type="entry name" value="PRK09457.1"/>
    <property type="match status" value="1"/>
</dbReference>
<dbReference type="PANTHER" id="PTHR43353">
    <property type="entry name" value="SUCCINATE-SEMIALDEHYDE DEHYDROGENASE, MITOCHONDRIAL"/>
    <property type="match status" value="1"/>
</dbReference>
<dbReference type="PANTHER" id="PTHR43353:SF5">
    <property type="entry name" value="SUCCINATE-SEMIALDEHYDE DEHYDROGENASE, MITOCHONDRIAL"/>
    <property type="match status" value="1"/>
</dbReference>
<dbReference type="Pfam" id="PF00171">
    <property type="entry name" value="Aldedh"/>
    <property type="match status" value="1"/>
</dbReference>
<dbReference type="SUPFAM" id="SSF53720">
    <property type="entry name" value="ALDH-like"/>
    <property type="match status" value="1"/>
</dbReference>
<dbReference type="PROSITE" id="PS00070">
    <property type="entry name" value="ALDEHYDE_DEHYDR_CYS"/>
    <property type="match status" value="1"/>
</dbReference>
<dbReference type="PROSITE" id="PS00687">
    <property type="entry name" value="ALDEHYDE_DEHYDR_GLU"/>
    <property type="match status" value="1"/>
</dbReference>
<feature type="chain" id="PRO_0000262397" description="N-succinylglutamate 5-semialdehyde dehydrogenase">
    <location>
        <begin position="1"/>
        <end position="489"/>
    </location>
</feature>
<feature type="active site" evidence="1">
    <location>
        <position position="247"/>
    </location>
</feature>
<feature type="active site" evidence="1">
    <location>
        <position position="281"/>
    </location>
</feature>
<feature type="binding site" evidence="1">
    <location>
        <begin position="224"/>
        <end position="229"/>
    </location>
    <ligand>
        <name>NAD(+)</name>
        <dbReference type="ChEBI" id="CHEBI:57540"/>
    </ligand>
</feature>
<comment type="function">
    <text evidence="1">Catalyzes the NAD-dependent reduction of succinylglutamate semialdehyde into succinylglutamate.</text>
</comment>
<comment type="catalytic activity">
    <reaction evidence="1">
        <text>N-succinyl-L-glutamate 5-semialdehyde + NAD(+) + H2O = N-succinyl-L-glutamate + NADH + 2 H(+)</text>
        <dbReference type="Rhea" id="RHEA:10812"/>
        <dbReference type="ChEBI" id="CHEBI:15377"/>
        <dbReference type="ChEBI" id="CHEBI:15378"/>
        <dbReference type="ChEBI" id="CHEBI:57540"/>
        <dbReference type="ChEBI" id="CHEBI:57945"/>
        <dbReference type="ChEBI" id="CHEBI:58520"/>
        <dbReference type="ChEBI" id="CHEBI:58763"/>
        <dbReference type="EC" id="1.2.1.71"/>
    </reaction>
</comment>
<comment type="pathway">
    <text evidence="1">Amino-acid degradation; L-arginine degradation via AST pathway; L-glutamate and succinate from L-arginine: step 4/5.</text>
</comment>
<comment type="similarity">
    <text evidence="1">Belongs to the aldehyde dehydrogenase family. AstD subfamily.</text>
</comment>
<reference key="1">
    <citation type="journal article" date="2011" name="Stand. Genomic Sci.">
        <title>Complete genome sequence of the halophilic and highly halotolerant Chromohalobacter salexigens type strain (1H11(T)).</title>
        <authorList>
            <person name="Copeland A."/>
            <person name="O'Connor K."/>
            <person name="Lucas S."/>
            <person name="Lapidus A."/>
            <person name="Berry K.W."/>
            <person name="Detter J.C."/>
            <person name="Del Rio T.G."/>
            <person name="Hammon N."/>
            <person name="Dalin E."/>
            <person name="Tice H."/>
            <person name="Pitluck S."/>
            <person name="Bruce D."/>
            <person name="Goodwin L."/>
            <person name="Han C."/>
            <person name="Tapia R."/>
            <person name="Saunders E."/>
            <person name="Schmutz J."/>
            <person name="Brettin T."/>
            <person name="Larimer F."/>
            <person name="Land M."/>
            <person name="Hauser L."/>
            <person name="Vargas C."/>
            <person name="Nieto J.J."/>
            <person name="Kyrpides N.C."/>
            <person name="Ivanova N."/>
            <person name="Goker M."/>
            <person name="Klenk H.P."/>
            <person name="Csonka L.N."/>
            <person name="Woyke T."/>
        </authorList>
    </citation>
    <scope>NUCLEOTIDE SEQUENCE [LARGE SCALE GENOMIC DNA]</scope>
    <source>
        <strain>ATCC BAA-138 / DSM 3043 / CIP 106854 / NCIMB 13768 / 1H11</strain>
    </source>
</reference>
<keyword id="KW-0056">Arginine metabolism</keyword>
<keyword id="KW-0520">NAD</keyword>
<keyword id="KW-0560">Oxidoreductase</keyword>
<keyword id="KW-1185">Reference proteome</keyword>
<evidence type="ECO:0000255" key="1">
    <source>
        <dbReference type="HAMAP-Rule" id="MF_01174"/>
    </source>
</evidence>